<gene>
    <name evidence="1" type="primary">purH</name>
    <name type="ordered locus">PST_3279</name>
</gene>
<protein>
    <recommendedName>
        <fullName evidence="1">Bifunctional purine biosynthesis protein PurH</fullName>
    </recommendedName>
    <domain>
        <recommendedName>
            <fullName evidence="1">Phosphoribosylaminoimidazolecarboxamide formyltransferase</fullName>
            <ecNumber evidence="1">2.1.2.3</ecNumber>
        </recommendedName>
        <alternativeName>
            <fullName evidence="1">AICAR transformylase</fullName>
        </alternativeName>
    </domain>
    <domain>
        <recommendedName>
            <fullName evidence="1">IMP cyclohydrolase</fullName>
            <ecNumber evidence="1">3.5.4.10</ecNumber>
        </recommendedName>
        <alternativeName>
            <fullName evidence="1">ATIC</fullName>
        </alternativeName>
        <alternativeName>
            <fullName evidence="1">IMP synthase</fullName>
        </alternativeName>
        <alternativeName>
            <fullName evidence="1">Inosinicase</fullName>
        </alternativeName>
    </domain>
</protein>
<proteinExistence type="inferred from homology"/>
<reference key="1">
    <citation type="journal article" date="2008" name="Proc. Natl. Acad. Sci. U.S.A.">
        <title>Nitrogen fixation island and rhizosphere competence traits in the genome of root-associated Pseudomonas stutzeri A1501.</title>
        <authorList>
            <person name="Yan Y."/>
            <person name="Yang J."/>
            <person name="Dou Y."/>
            <person name="Chen M."/>
            <person name="Ping S."/>
            <person name="Peng J."/>
            <person name="Lu W."/>
            <person name="Zhang W."/>
            <person name="Yao Z."/>
            <person name="Li H."/>
            <person name="Liu W."/>
            <person name="He S."/>
            <person name="Geng L."/>
            <person name="Zhang X."/>
            <person name="Yang F."/>
            <person name="Yu H."/>
            <person name="Zhan Y."/>
            <person name="Li D."/>
            <person name="Lin Z."/>
            <person name="Wang Y."/>
            <person name="Elmerich C."/>
            <person name="Lin M."/>
            <person name="Jin Q."/>
        </authorList>
    </citation>
    <scope>NUCLEOTIDE SEQUENCE [LARGE SCALE GENOMIC DNA]</scope>
    <source>
        <strain>A1501</strain>
    </source>
</reference>
<dbReference type="EC" id="2.1.2.3" evidence="1"/>
<dbReference type="EC" id="3.5.4.10" evidence="1"/>
<dbReference type="EMBL" id="CP000304">
    <property type="protein sequence ID" value="ABP80910.1"/>
    <property type="molecule type" value="Genomic_DNA"/>
</dbReference>
<dbReference type="RefSeq" id="WP_011914342.1">
    <property type="nucleotide sequence ID" value="NC_009434.1"/>
</dbReference>
<dbReference type="SMR" id="A4VPK9"/>
<dbReference type="KEGG" id="psa:PST_3279"/>
<dbReference type="eggNOG" id="COG0138">
    <property type="taxonomic scope" value="Bacteria"/>
</dbReference>
<dbReference type="HOGENOM" id="CLU_016316_5_2_6"/>
<dbReference type="UniPathway" id="UPA00074">
    <property type="reaction ID" value="UER00133"/>
</dbReference>
<dbReference type="UniPathway" id="UPA00074">
    <property type="reaction ID" value="UER00135"/>
</dbReference>
<dbReference type="Proteomes" id="UP000000233">
    <property type="component" value="Chromosome"/>
</dbReference>
<dbReference type="GO" id="GO:0005829">
    <property type="term" value="C:cytosol"/>
    <property type="evidence" value="ECO:0007669"/>
    <property type="project" value="TreeGrafter"/>
</dbReference>
<dbReference type="GO" id="GO:0003937">
    <property type="term" value="F:IMP cyclohydrolase activity"/>
    <property type="evidence" value="ECO:0007669"/>
    <property type="project" value="UniProtKB-UniRule"/>
</dbReference>
<dbReference type="GO" id="GO:0004643">
    <property type="term" value="F:phosphoribosylaminoimidazolecarboxamide formyltransferase activity"/>
    <property type="evidence" value="ECO:0007669"/>
    <property type="project" value="UniProtKB-UniRule"/>
</dbReference>
<dbReference type="GO" id="GO:0006189">
    <property type="term" value="P:'de novo' IMP biosynthetic process"/>
    <property type="evidence" value="ECO:0007669"/>
    <property type="project" value="UniProtKB-UniRule"/>
</dbReference>
<dbReference type="CDD" id="cd01421">
    <property type="entry name" value="IMPCH"/>
    <property type="match status" value="1"/>
</dbReference>
<dbReference type="FunFam" id="3.40.140.20:FF:000001">
    <property type="entry name" value="Bifunctional purine biosynthesis protein PurH"/>
    <property type="match status" value="1"/>
</dbReference>
<dbReference type="FunFam" id="3.40.140.20:FF:000002">
    <property type="entry name" value="Bifunctional purine biosynthesis protein PurH"/>
    <property type="match status" value="1"/>
</dbReference>
<dbReference type="FunFam" id="3.40.50.1380:FF:000001">
    <property type="entry name" value="Bifunctional purine biosynthesis protein PurH"/>
    <property type="match status" value="1"/>
</dbReference>
<dbReference type="Gene3D" id="3.40.140.20">
    <property type="match status" value="2"/>
</dbReference>
<dbReference type="Gene3D" id="3.40.50.1380">
    <property type="entry name" value="Methylglyoxal synthase-like domain"/>
    <property type="match status" value="1"/>
</dbReference>
<dbReference type="HAMAP" id="MF_00139">
    <property type="entry name" value="PurH"/>
    <property type="match status" value="1"/>
</dbReference>
<dbReference type="InterPro" id="IPR024051">
    <property type="entry name" value="AICAR_Tfase_dup_dom_sf"/>
</dbReference>
<dbReference type="InterPro" id="IPR016193">
    <property type="entry name" value="Cytidine_deaminase-like"/>
</dbReference>
<dbReference type="InterPro" id="IPR011607">
    <property type="entry name" value="MGS-like_dom"/>
</dbReference>
<dbReference type="InterPro" id="IPR036914">
    <property type="entry name" value="MGS-like_dom_sf"/>
</dbReference>
<dbReference type="InterPro" id="IPR002695">
    <property type="entry name" value="PurH-like"/>
</dbReference>
<dbReference type="NCBIfam" id="NF002049">
    <property type="entry name" value="PRK00881.1"/>
    <property type="match status" value="1"/>
</dbReference>
<dbReference type="NCBIfam" id="TIGR00355">
    <property type="entry name" value="purH"/>
    <property type="match status" value="1"/>
</dbReference>
<dbReference type="PANTHER" id="PTHR11692:SF0">
    <property type="entry name" value="BIFUNCTIONAL PURINE BIOSYNTHESIS PROTEIN ATIC"/>
    <property type="match status" value="1"/>
</dbReference>
<dbReference type="PANTHER" id="PTHR11692">
    <property type="entry name" value="BIFUNCTIONAL PURINE BIOSYNTHESIS PROTEIN PURH"/>
    <property type="match status" value="1"/>
</dbReference>
<dbReference type="Pfam" id="PF01808">
    <property type="entry name" value="AICARFT_IMPCHas"/>
    <property type="match status" value="1"/>
</dbReference>
<dbReference type="Pfam" id="PF02142">
    <property type="entry name" value="MGS"/>
    <property type="match status" value="1"/>
</dbReference>
<dbReference type="PIRSF" id="PIRSF000414">
    <property type="entry name" value="AICARFT_IMPCHas"/>
    <property type="match status" value="1"/>
</dbReference>
<dbReference type="SMART" id="SM00798">
    <property type="entry name" value="AICARFT_IMPCHas"/>
    <property type="match status" value="1"/>
</dbReference>
<dbReference type="SMART" id="SM00851">
    <property type="entry name" value="MGS"/>
    <property type="match status" value="1"/>
</dbReference>
<dbReference type="SUPFAM" id="SSF53927">
    <property type="entry name" value="Cytidine deaminase-like"/>
    <property type="match status" value="1"/>
</dbReference>
<dbReference type="SUPFAM" id="SSF52335">
    <property type="entry name" value="Methylglyoxal synthase-like"/>
    <property type="match status" value="1"/>
</dbReference>
<dbReference type="PROSITE" id="PS51855">
    <property type="entry name" value="MGS"/>
    <property type="match status" value="1"/>
</dbReference>
<comment type="catalytic activity">
    <reaction evidence="1">
        <text>(6R)-10-formyltetrahydrofolate + 5-amino-1-(5-phospho-beta-D-ribosyl)imidazole-4-carboxamide = 5-formamido-1-(5-phospho-D-ribosyl)imidazole-4-carboxamide + (6S)-5,6,7,8-tetrahydrofolate</text>
        <dbReference type="Rhea" id="RHEA:22192"/>
        <dbReference type="ChEBI" id="CHEBI:57453"/>
        <dbReference type="ChEBI" id="CHEBI:58467"/>
        <dbReference type="ChEBI" id="CHEBI:58475"/>
        <dbReference type="ChEBI" id="CHEBI:195366"/>
        <dbReference type="EC" id="2.1.2.3"/>
    </reaction>
</comment>
<comment type="catalytic activity">
    <reaction evidence="1">
        <text>IMP + H2O = 5-formamido-1-(5-phospho-D-ribosyl)imidazole-4-carboxamide</text>
        <dbReference type="Rhea" id="RHEA:18445"/>
        <dbReference type="ChEBI" id="CHEBI:15377"/>
        <dbReference type="ChEBI" id="CHEBI:58053"/>
        <dbReference type="ChEBI" id="CHEBI:58467"/>
        <dbReference type="EC" id="3.5.4.10"/>
    </reaction>
</comment>
<comment type="pathway">
    <text evidence="1">Purine metabolism; IMP biosynthesis via de novo pathway; 5-formamido-1-(5-phospho-D-ribosyl)imidazole-4-carboxamide from 5-amino-1-(5-phospho-D-ribosyl)imidazole-4-carboxamide (10-formyl THF route): step 1/1.</text>
</comment>
<comment type="pathway">
    <text evidence="1">Purine metabolism; IMP biosynthesis via de novo pathway; IMP from 5-formamido-1-(5-phospho-D-ribosyl)imidazole-4-carboxamide: step 1/1.</text>
</comment>
<comment type="domain">
    <text evidence="1">The IMP cyclohydrolase activity resides in the N-terminal region.</text>
</comment>
<comment type="similarity">
    <text evidence="1">Belongs to the PurH family.</text>
</comment>
<keyword id="KW-0378">Hydrolase</keyword>
<keyword id="KW-0511">Multifunctional enzyme</keyword>
<keyword id="KW-0658">Purine biosynthesis</keyword>
<keyword id="KW-1185">Reference proteome</keyword>
<keyword id="KW-0808">Transferase</keyword>
<organism>
    <name type="scientific">Stutzerimonas stutzeri (strain A1501)</name>
    <name type="common">Pseudomonas stutzeri</name>
    <dbReference type="NCBI Taxonomy" id="379731"/>
    <lineage>
        <taxon>Bacteria</taxon>
        <taxon>Pseudomonadati</taxon>
        <taxon>Pseudomonadota</taxon>
        <taxon>Gammaproteobacteria</taxon>
        <taxon>Pseudomonadales</taxon>
        <taxon>Pseudomonadaceae</taxon>
        <taxon>Stutzerimonas</taxon>
    </lineage>
</organism>
<feature type="chain" id="PRO_1000018942" description="Bifunctional purine biosynthesis protein PurH">
    <location>
        <begin position="1"/>
        <end position="534"/>
    </location>
</feature>
<feature type="domain" description="MGS-like" evidence="2">
    <location>
        <begin position="6"/>
        <end position="151"/>
    </location>
</feature>
<evidence type="ECO:0000255" key="1">
    <source>
        <dbReference type="HAMAP-Rule" id="MF_00139"/>
    </source>
</evidence>
<evidence type="ECO:0000255" key="2">
    <source>
        <dbReference type="PROSITE-ProRule" id="PRU01202"/>
    </source>
</evidence>
<sequence>MTDQTTRLPVRRALISVSDKTGVVDFARELEALGVEILSTGGTFKLLRENGIAAIEVADYTGFPEMMDGRVKTLHPKIHGGILGRRDLDGAVMAEHGIAPIDLVAVNLYPFAATVAKPGCTLPDAIENIDIGGPTMVRSAAKNHKDVAIVVNAEDYAAVVDNLKNGGLTYAQRFDLALKAFEHTAGYDGMIANYLGGIDQSTEQLSTDNRSLFPRTYNMQFIKAQDMRYGENPHQQAAFYVEKPDEACVATARQLQGKELSFNNVADTDAALECVKSFTKPACVIVKHANPCGVAVVPENEGGIRKAYDLAYATDSESAFGGIIAFNRELDGETAQAIVERQFVEVIIAPKVSQAARDVVASKANVRLLECGEWPAERSPGWDYKRVNGGLLIQSRDIGMITEADLKIVTQRAPTEQEIHDLIFAWKVAKFVKSNAIVYAKNRQTVGVGAGQMSRVNSARIAAIKAEHAGLQVQGAVMASDAFFPFRDGIDNAAKAGITAVIQPGGSMRDNEVIAAADEAGIAMVFTGMRHFRH</sequence>
<accession>A4VPK9</accession>
<name>PUR9_STUS1</name>